<name>RL15_NITWN</name>
<reference key="1">
    <citation type="journal article" date="2006" name="Appl. Environ. Microbiol.">
        <title>Genome sequence of the chemolithoautotrophic nitrite-oxidizing bacterium Nitrobacter winogradskyi Nb-255.</title>
        <authorList>
            <person name="Starkenburg S.R."/>
            <person name="Chain P.S.G."/>
            <person name="Sayavedra-Soto L.A."/>
            <person name="Hauser L."/>
            <person name="Land M.L."/>
            <person name="Larimer F.W."/>
            <person name="Malfatti S.A."/>
            <person name="Klotz M.G."/>
            <person name="Bottomley P.J."/>
            <person name="Arp D.J."/>
            <person name="Hickey W.J."/>
        </authorList>
    </citation>
    <scope>NUCLEOTIDE SEQUENCE [LARGE SCALE GENOMIC DNA]</scope>
    <source>
        <strain>ATCC 25391 / DSM 10237 / CIP 104748 / NCIMB 11846 / Nb-255</strain>
    </source>
</reference>
<feature type="chain" id="PRO_0000251532" description="Large ribosomal subunit protein uL15">
    <location>
        <begin position="1"/>
        <end position="161"/>
    </location>
</feature>
<feature type="region of interest" description="Disordered" evidence="2">
    <location>
        <begin position="1"/>
        <end position="50"/>
    </location>
</feature>
<feature type="compositionally biased region" description="Gly residues" evidence="2">
    <location>
        <begin position="21"/>
        <end position="37"/>
    </location>
</feature>
<proteinExistence type="inferred from homology"/>
<gene>
    <name evidence="1" type="primary">rplO</name>
    <name type="ordered locus">Nwi_1383</name>
</gene>
<comment type="function">
    <text evidence="1">Binds to the 23S rRNA.</text>
</comment>
<comment type="subunit">
    <text evidence="1">Part of the 50S ribosomal subunit.</text>
</comment>
<comment type="similarity">
    <text evidence="1">Belongs to the universal ribosomal protein uL15 family.</text>
</comment>
<dbReference type="EMBL" id="CP000115">
    <property type="protein sequence ID" value="ABA04644.1"/>
    <property type="molecule type" value="Genomic_DNA"/>
</dbReference>
<dbReference type="RefSeq" id="WP_011314657.1">
    <property type="nucleotide sequence ID" value="NC_007406.1"/>
</dbReference>
<dbReference type="SMR" id="Q3SSU7"/>
<dbReference type="STRING" id="323098.Nwi_1383"/>
<dbReference type="KEGG" id="nwi:Nwi_1383"/>
<dbReference type="eggNOG" id="COG0200">
    <property type="taxonomic scope" value="Bacteria"/>
</dbReference>
<dbReference type="HOGENOM" id="CLU_055188_4_0_5"/>
<dbReference type="OrthoDB" id="9810293at2"/>
<dbReference type="Proteomes" id="UP000002531">
    <property type="component" value="Chromosome"/>
</dbReference>
<dbReference type="GO" id="GO:0022625">
    <property type="term" value="C:cytosolic large ribosomal subunit"/>
    <property type="evidence" value="ECO:0007669"/>
    <property type="project" value="TreeGrafter"/>
</dbReference>
<dbReference type="GO" id="GO:0019843">
    <property type="term" value="F:rRNA binding"/>
    <property type="evidence" value="ECO:0007669"/>
    <property type="project" value="UniProtKB-UniRule"/>
</dbReference>
<dbReference type="GO" id="GO:0003735">
    <property type="term" value="F:structural constituent of ribosome"/>
    <property type="evidence" value="ECO:0007669"/>
    <property type="project" value="InterPro"/>
</dbReference>
<dbReference type="GO" id="GO:0006412">
    <property type="term" value="P:translation"/>
    <property type="evidence" value="ECO:0007669"/>
    <property type="project" value="UniProtKB-UniRule"/>
</dbReference>
<dbReference type="Gene3D" id="3.100.10.10">
    <property type="match status" value="1"/>
</dbReference>
<dbReference type="HAMAP" id="MF_01341">
    <property type="entry name" value="Ribosomal_uL15"/>
    <property type="match status" value="1"/>
</dbReference>
<dbReference type="InterPro" id="IPR030878">
    <property type="entry name" value="Ribosomal_uL15"/>
</dbReference>
<dbReference type="InterPro" id="IPR021131">
    <property type="entry name" value="Ribosomal_uL15/eL18"/>
</dbReference>
<dbReference type="InterPro" id="IPR036227">
    <property type="entry name" value="Ribosomal_uL15/eL18_sf"/>
</dbReference>
<dbReference type="InterPro" id="IPR005749">
    <property type="entry name" value="Ribosomal_uL15_bac-type"/>
</dbReference>
<dbReference type="InterPro" id="IPR001196">
    <property type="entry name" value="Ribosomal_uL15_CS"/>
</dbReference>
<dbReference type="NCBIfam" id="TIGR01071">
    <property type="entry name" value="rplO_bact"/>
    <property type="match status" value="1"/>
</dbReference>
<dbReference type="PANTHER" id="PTHR12934">
    <property type="entry name" value="50S RIBOSOMAL PROTEIN L15"/>
    <property type="match status" value="1"/>
</dbReference>
<dbReference type="PANTHER" id="PTHR12934:SF11">
    <property type="entry name" value="LARGE RIBOSOMAL SUBUNIT PROTEIN UL15M"/>
    <property type="match status" value="1"/>
</dbReference>
<dbReference type="Pfam" id="PF00828">
    <property type="entry name" value="Ribosomal_L27A"/>
    <property type="match status" value="1"/>
</dbReference>
<dbReference type="SUPFAM" id="SSF52080">
    <property type="entry name" value="Ribosomal proteins L15p and L18e"/>
    <property type="match status" value="1"/>
</dbReference>
<dbReference type="PROSITE" id="PS00475">
    <property type="entry name" value="RIBOSOMAL_L15"/>
    <property type="match status" value="1"/>
</dbReference>
<protein>
    <recommendedName>
        <fullName evidence="1">Large ribosomal subunit protein uL15</fullName>
    </recommendedName>
    <alternativeName>
        <fullName evidence="3">50S ribosomal protein L15</fullName>
    </alternativeName>
</protein>
<accession>Q3SSU7</accession>
<organism>
    <name type="scientific">Nitrobacter winogradskyi (strain ATCC 25391 / DSM 10237 / CIP 104748 / NCIMB 11846 / Nb-255)</name>
    <dbReference type="NCBI Taxonomy" id="323098"/>
    <lineage>
        <taxon>Bacteria</taxon>
        <taxon>Pseudomonadati</taxon>
        <taxon>Pseudomonadota</taxon>
        <taxon>Alphaproteobacteria</taxon>
        <taxon>Hyphomicrobiales</taxon>
        <taxon>Nitrobacteraceae</taxon>
        <taxon>Nitrobacter</taxon>
    </lineage>
</organism>
<sequence>MKLSDIADNAGSRKKRMRIGRGIGSGKGKTGGRGGKGQTARSGVRINGFEGGQMPLHRRLPKRGFNNIFRVEFAEINLDRLQDAIDAGSIDANTTINAESLVKSGVVRRAKGGVRLLGRGEIKAKLTVEVHGASKSAIAAVEKAGGTVKILAPKKDEGEAA</sequence>
<keyword id="KW-1185">Reference proteome</keyword>
<keyword id="KW-0687">Ribonucleoprotein</keyword>
<keyword id="KW-0689">Ribosomal protein</keyword>
<keyword id="KW-0694">RNA-binding</keyword>
<keyword id="KW-0699">rRNA-binding</keyword>
<evidence type="ECO:0000255" key="1">
    <source>
        <dbReference type="HAMAP-Rule" id="MF_01341"/>
    </source>
</evidence>
<evidence type="ECO:0000256" key="2">
    <source>
        <dbReference type="SAM" id="MobiDB-lite"/>
    </source>
</evidence>
<evidence type="ECO:0000305" key="3"/>